<evidence type="ECO:0000250" key="1"/>
<evidence type="ECO:0000255" key="2">
    <source>
        <dbReference type="HAMAP-Rule" id="MF_00145"/>
    </source>
</evidence>
<dbReference type="EC" id="2.7.2.3" evidence="2"/>
<dbReference type="EMBL" id="AE009949">
    <property type="protein sequence ID" value="AAL98442.1"/>
    <property type="molecule type" value="Genomic_DNA"/>
</dbReference>
<dbReference type="RefSeq" id="WP_011018209.1">
    <property type="nucleotide sequence ID" value="NC_003485.1"/>
</dbReference>
<dbReference type="SMR" id="Q8NZG3"/>
<dbReference type="KEGG" id="spm:spyM18_1946"/>
<dbReference type="HOGENOM" id="CLU_025427_0_1_9"/>
<dbReference type="UniPathway" id="UPA00109">
    <property type="reaction ID" value="UER00185"/>
</dbReference>
<dbReference type="GO" id="GO:0005829">
    <property type="term" value="C:cytosol"/>
    <property type="evidence" value="ECO:0007669"/>
    <property type="project" value="TreeGrafter"/>
</dbReference>
<dbReference type="GO" id="GO:0043531">
    <property type="term" value="F:ADP binding"/>
    <property type="evidence" value="ECO:0007669"/>
    <property type="project" value="TreeGrafter"/>
</dbReference>
<dbReference type="GO" id="GO:0005524">
    <property type="term" value="F:ATP binding"/>
    <property type="evidence" value="ECO:0007669"/>
    <property type="project" value="UniProtKB-KW"/>
</dbReference>
<dbReference type="GO" id="GO:0004618">
    <property type="term" value="F:phosphoglycerate kinase activity"/>
    <property type="evidence" value="ECO:0007669"/>
    <property type="project" value="UniProtKB-UniRule"/>
</dbReference>
<dbReference type="GO" id="GO:0006094">
    <property type="term" value="P:gluconeogenesis"/>
    <property type="evidence" value="ECO:0007669"/>
    <property type="project" value="TreeGrafter"/>
</dbReference>
<dbReference type="GO" id="GO:0006096">
    <property type="term" value="P:glycolytic process"/>
    <property type="evidence" value="ECO:0007669"/>
    <property type="project" value="UniProtKB-UniRule"/>
</dbReference>
<dbReference type="FunFam" id="3.40.50.1260:FF:000001">
    <property type="entry name" value="Phosphoglycerate kinase"/>
    <property type="match status" value="1"/>
</dbReference>
<dbReference type="FunFam" id="3.40.50.1260:FF:000008">
    <property type="entry name" value="Phosphoglycerate kinase"/>
    <property type="match status" value="1"/>
</dbReference>
<dbReference type="Gene3D" id="3.40.50.1260">
    <property type="entry name" value="Phosphoglycerate kinase, N-terminal domain"/>
    <property type="match status" value="2"/>
</dbReference>
<dbReference type="HAMAP" id="MF_00145">
    <property type="entry name" value="Phosphoglyc_kinase"/>
    <property type="match status" value="1"/>
</dbReference>
<dbReference type="InterPro" id="IPR001576">
    <property type="entry name" value="Phosphoglycerate_kinase"/>
</dbReference>
<dbReference type="InterPro" id="IPR015911">
    <property type="entry name" value="Phosphoglycerate_kinase_CS"/>
</dbReference>
<dbReference type="InterPro" id="IPR015824">
    <property type="entry name" value="Phosphoglycerate_kinase_N"/>
</dbReference>
<dbReference type="InterPro" id="IPR036043">
    <property type="entry name" value="Phosphoglycerate_kinase_sf"/>
</dbReference>
<dbReference type="PANTHER" id="PTHR11406">
    <property type="entry name" value="PHOSPHOGLYCERATE KINASE"/>
    <property type="match status" value="1"/>
</dbReference>
<dbReference type="PANTHER" id="PTHR11406:SF23">
    <property type="entry name" value="PHOSPHOGLYCERATE KINASE 1, CHLOROPLASTIC-RELATED"/>
    <property type="match status" value="1"/>
</dbReference>
<dbReference type="Pfam" id="PF00162">
    <property type="entry name" value="PGK"/>
    <property type="match status" value="1"/>
</dbReference>
<dbReference type="PIRSF" id="PIRSF000724">
    <property type="entry name" value="Pgk"/>
    <property type="match status" value="1"/>
</dbReference>
<dbReference type="PRINTS" id="PR00477">
    <property type="entry name" value="PHGLYCKINASE"/>
</dbReference>
<dbReference type="SUPFAM" id="SSF53748">
    <property type="entry name" value="Phosphoglycerate kinase"/>
    <property type="match status" value="1"/>
</dbReference>
<dbReference type="PROSITE" id="PS00111">
    <property type="entry name" value="PGLYCERATE_KINASE"/>
    <property type="match status" value="1"/>
</dbReference>
<organism>
    <name type="scientific">Streptococcus pyogenes serotype M18 (strain MGAS8232)</name>
    <dbReference type="NCBI Taxonomy" id="186103"/>
    <lineage>
        <taxon>Bacteria</taxon>
        <taxon>Bacillati</taxon>
        <taxon>Bacillota</taxon>
        <taxon>Bacilli</taxon>
        <taxon>Lactobacillales</taxon>
        <taxon>Streptococcaceae</taxon>
        <taxon>Streptococcus</taxon>
    </lineage>
</organism>
<sequence length="398" mass="42129">MAKLTVKDVDLKGKKVLVRVDFNVPLKDGVITNDNRITAALPTIKYIIEQGGRAILFSHLGRVKEEADKEGKSLAPVAADLAAKLGQDVVFPGVTRGSKLEEAINALEDGQVLLVENTRFEDVDGKKESKNDEELGKYWASLGDGIFVNDAFGTAHRAHASNVGISANVEKAVAGFLLENEIAYIQEAVETPERPFVAILGGSKVSDKIGVIENLLEKADKVLIGGGMTYTFYKAQGIEIGNSLVEEDKLDVAKDLLEKSNGKLILPVDSKEANAFAGYTEVRDTEGEAVSKGFLGLDIGPKSIAEFDQALTGAKTVVWNGPMGVFENPDFQAGTIGVMDAIVKQPGVKSIIGGGDSAAAAINLGRADKFSWISTGGGASMELLEGKVLPGLAALTEK</sequence>
<reference key="1">
    <citation type="journal article" date="2002" name="Proc. Natl. Acad. Sci. U.S.A.">
        <title>Genome sequence and comparative microarray analysis of serotype M18 group A Streptococcus strains associated with acute rheumatic fever outbreaks.</title>
        <authorList>
            <person name="Smoot J.C."/>
            <person name="Barbian K.D."/>
            <person name="Van Gompel J.J."/>
            <person name="Smoot L.M."/>
            <person name="Chaussee M.S."/>
            <person name="Sylva G.L."/>
            <person name="Sturdevant D.E."/>
            <person name="Ricklefs S.M."/>
            <person name="Porcella S.F."/>
            <person name="Parkins L.D."/>
            <person name="Beres S.B."/>
            <person name="Campbell D.S."/>
            <person name="Smith T.M."/>
            <person name="Zhang Q."/>
            <person name="Kapur V."/>
            <person name="Daly J.A."/>
            <person name="Veasy L.G."/>
            <person name="Musser J.M."/>
        </authorList>
    </citation>
    <scope>NUCLEOTIDE SEQUENCE [LARGE SCALE GENOMIC DNA]</scope>
    <source>
        <strain>MGAS8232</strain>
    </source>
</reference>
<name>PGK_STRP8</name>
<accession>Q8NZG3</accession>
<protein>
    <recommendedName>
        <fullName evidence="2">Phosphoglycerate kinase</fullName>
        <ecNumber evidence="2">2.7.2.3</ecNumber>
    </recommendedName>
</protein>
<comment type="catalytic activity">
    <reaction evidence="2">
        <text>(2R)-3-phosphoglycerate + ATP = (2R)-3-phospho-glyceroyl phosphate + ADP</text>
        <dbReference type="Rhea" id="RHEA:14801"/>
        <dbReference type="ChEBI" id="CHEBI:30616"/>
        <dbReference type="ChEBI" id="CHEBI:57604"/>
        <dbReference type="ChEBI" id="CHEBI:58272"/>
        <dbReference type="ChEBI" id="CHEBI:456216"/>
        <dbReference type="EC" id="2.7.2.3"/>
    </reaction>
</comment>
<comment type="pathway">
    <text evidence="2">Carbohydrate degradation; glycolysis; pyruvate from D-glyceraldehyde 3-phosphate: step 2/5.</text>
</comment>
<comment type="subunit">
    <text evidence="2">Monomer.</text>
</comment>
<comment type="subcellular location">
    <subcellularLocation>
        <location evidence="2">Cytoplasm</location>
    </subcellularLocation>
</comment>
<comment type="similarity">
    <text evidence="2">Belongs to the phosphoglycerate kinase family.</text>
</comment>
<proteinExistence type="inferred from homology"/>
<keyword id="KW-0067">ATP-binding</keyword>
<keyword id="KW-0963">Cytoplasm</keyword>
<keyword id="KW-0324">Glycolysis</keyword>
<keyword id="KW-0418">Kinase</keyword>
<keyword id="KW-0547">Nucleotide-binding</keyword>
<keyword id="KW-0808">Transferase</keyword>
<feature type="initiator methionine" description="Removed" evidence="1">
    <location>
        <position position="1"/>
    </location>
</feature>
<feature type="chain" id="PRO_0000146020" description="Phosphoglycerate kinase">
    <location>
        <begin position="2"/>
        <end position="398"/>
    </location>
</feature>
<feature type="binding site" evidence="2">
    <location>
        <begin position="21"/>
        <end position="23"/>
    </location>
    <ligand>
        <name>substrate</name>
    </ligand>
</feature>
<feature type="binding site" evidence="2">
    <location>
        <position position="36"/>
    </location>
    <ligand>
        <name>substrate</name>
    </ligand>
</feature>
<feature type="binding site" evidence="2">
    <location>
        <begin position="59"/>
        <end position="62"/>
    </location>
    <ligand>
        <name>substrate</name>
    </ligand>
</feature>
<feature type="binding site" evidence="2">
    <location>
        <position position="119"/>
    </location>
    <ligand>
        <name>substrate</name>
    </ligand>
</feature>
<feature type="binding site" evidence="2">
    <location>
        <position position="157"/>
    </location>
    <ligand>
        <name>substrate</name>
    </ligand>
</feature>
<feature type="binding site" evidence="2">
    <location>
        <position position="208"/>
    </location>
    <ligand>
        <name>ATP</name>
        <dbReference type="ChEBI" id="CHEBI:30616"/>
    </ligand>
</feature>
<feature type="binding site" evidence="2">
    <location>
        <position position="296"/>
    </location>
    <ligand>
        <name>ATP</name>
        <dbReference type="ChEBI" id="CHEBI:30616"/>
    </ligand>
</feature>
<feature type="binding site" evidence="2">
    <location>
        <position position="327"/>
    </location>
    <ligand>
        <name>ATP</name>
        <dbReference type="ChEBI" id="CHEBI:30616"/>
    </ligand>
</feature>
<feature type="binding site" evidence="2">
    <location>
        <begin position="354"/>
        <end position="357"/>
    </location>
    <ligand>
        <name>ATP</name>
        <dbReference type="ChEBI" id="CHEBI:30616"/>
    </ligand>
</feature>
<gene>
    <name evidence="2" type="primary">pgk</name>
    <name type="ordered locus">spyM18_1946</name>
</gene>